<sequence>MRVKHKPWAKDRLEEFPAIYIKNPEDFKGQWREVFGNDNPVHIEIGSGKGQFISGMAKANPEINYIGIEMIESVLVSALDKAIEADVSNLRLVARDAKLLEECFEKGEIAQIYLNFSDPWPKKRHTKRRLTNPTFLTIYERLLPEAGEIHFKTDNRSLFEYSLVAFSEYNMLLTFVSLDLHNSDYEGNIKTEYEEKFSAKGFPIYRLEAKFDRN</sequence>
<organism>
    <name type="scientific">Listeria monocytogenes serotype 4b (strain F2365)</name>
    <dbReference type="NCBI Taxonomy" id="265669"/>
    <lineage>
        <taxon>Bacteria</taxon>
        <taxon>Bacillati</taxon>
        <taxon>Bacillota</taxon>
        <taxon>Bacilli</taxon>
        <taxon>Bacillales</taxon>
        <taxon>Listeriaceae</taxon>
        <taxon>Listeria</taxon>
    </lineage>
</organism>
<accession>Q71Z52</accession>
<name>TRMB_LISMF</name>
<gene>
    <name evidence="2" type="primary">trmB</name>
    <name type="ordered locus">LMOf2365_1637</name>
</gene>
<keyword id="KW-0489">Methyltransferase</keyword>
<keyword id="KW-0949">S-adenosyl-L-methionine</keyword>
<keyword id="KW-0808">Transferase</keyword>
<keyword id="KW-0819">tRNA processing</keyword>
<comment type="function">
    <text evidence="2">Catalyzes the formation of N(7)-methylguanine at position 46 (m7G46) in tRNA.</text>
</comment>
<comment type="catalytic activity">
    <reaction evidence="2">
        <text>guanosine(46) in tRNA + S-adenosyl-L-methionine = N(7)-methylguanosine(46) in tRNA + S-adenosyl-L-homocysteine</text>
        <dbReference type="Rhea" id="RHEA:42708"/>
        <dbReference type="Rhea" id="RHEA-COMP:10188"/>
        <dbReference type="Rhea" id="RHEA-COMP:10189"/>
        <dbReference type="ChEBI" id="CHEBI:57856"/>
        <dbReference type="ChEBI" id="CHEBI:59789"/>
        <dbReference type="ChEBI" id="CHEBI:74269"/>
        <dbReference type="ChEBI" id="CHEBI:74480"/>
        <dbReference type="EC" id="2.1.1.33"/>
    </reaction>
</comment>
<comment type="pathway">
    <text evidence="2">tRNA modification; N(7)-methylguanine-tRNA biosynthesis.</text>
</comment>
<comment type="similarity">
    <text evidence="2">Belongs to the class I-like SAM-binding methyltransferase superfamily. TrmB family.</text>
</comment>
<feature type="chain" id="PRO_0000171344" description="tRNA (guanine-N(7)-)-methyltransferase">
    <location>
        <begin position="1"/>
        <end position="214"/>
    </location>
</feature>
<feature type="active site" evidence="1">
    <location>
        <position position="118"/>
    </location>
</feature>
<feature type="binding site" evidence="2">
    <location>
        <position position="44"/>
    </location>
    <ligand>
        <name>S-adenosyl-L-methionine</name>
        <dbReference type="ChEBI" id="CHEBI:59789"/>
    </ligand>
</feature>
<feature type="binding site" evidence="2">
    <location>
        <position position="69"/>
    </location>
    <ligand>
        <name>S-adenosyl-L-methionine</name>
        <dbReference type="ChEBI" id="CHEBI:59789"/>
    </ligand>
</feature>
<feature type="binding site" evidence="2">
    <location>
        <position position="96"/>
    </location>
    <ligand>
        <name>S-adenosyl-L-methionine</name>
        <dbReference type="ChEBI" id="CHEBI:59789"/>
    </ligand>
</feature>
<feature type="binding site" evidence="2">
    <location>
        <position position="118"/>
    </location>
    <ligand>
        <name>S-adenosyl-L-methionine</name>
        <dbReference type="ChEBI" id="CHEBI:59789"/>
    </ligand>
</feature>
<feature type="binding site" evidence="2">
    <location>
        <position position="122"/>
    </location>
    <ligand>
        <name>substrate</name>
    </ligand>
</feature>
<feature type="binding site" evidence="2">
    <location>
        <position position="154"/>
    </location>
    <ligand>
        <name>substrate</name>
    </ligand>
</feature>
<feature type="binding site" evidence="2">
    <location>
        <begin position="191"/>
        <end position="194"/>
    </location>
    <ligand>
        <name>substrate</name>
    </ligand>
</feature>
<protein>
    <recommendedName>
        <fullName evidence="2">tRNA (guanine-N(7)-)-methyltransferase</fullName>
        <ecNumber evidence="2">2.1.1.33</ecNumber>
    </recommendedName>
    <alternativeName>
        <fullName evidence="2">tRNA (guanine(46)-N(7))-methyltransferase</fullName>
    </alternativeName>
    <alternativeName>
        <fullName evidence="2">tRNA(m7G46)-methyltransferase</fullName>
    </alternativeName>
</protein>
<dbReference type="EC" id="2.1.1.33" evidence="2"/>
<dbReference type="EMBL" id="AE017262">
    <property type="protein sequence ID" value="AAT04412.1"/>
    <property type="molecule type" value="Genomic_DNA"/>
</dbReference>
<dbReference type="RefSeq" id="WP_003727359.1">
    <property type="nucleotide sequence ID" value="NC_002973.6"/>
</dbReference>
<dbReference type="SMR" id="Q71Z52"/>
<dbReference type="KEGG" id="lmf:LMOf2365_1637"/>
<dbReference type="HOGENOM" id="CLU_050910_2_1_9"/>
<dbReference type="UniPathway" id="UPA00989"/>
<dbReference type="GO" id="GO:0043527">
    <property type="term" value="C:tRNA methyltransferase complex"/>
    <property type="evidence" value="ECO:0007669"/>
    <property type="project" value="TreeGrafter"/>
</dbReference>
<dbReference type="GO" id="GO:0008176">
    <property type="term" value="F:tRNA (guanine(46)-N7)-methyltransferase activity"/>
    <property type="evidence" value="ECO:0007669"/>
    <property type="project" value="UniProtKB-UniRule"/>
</dbReference>
<dbReference type="CDD" id="cd02440">
    <property type="entry name" value="AdoMet_MTases"/>
    <property type="match status" value="1"/>
</dbReference>
<dbReference type="FunFam" id="3.40.50.150:FF:000035">
    <property type="entry name" value="tRNA (guanine-N(7)-)-methyltransferase"/>
    <property type="match status" value="1"/>
</dbReference>
<dbReference type="Gene3D" id="3.40.50.150">
    <property type="entry name" value="Vaccinia Virus protein VP39"/>
    <property type="match status" value="1"/>
</dbReference>
<dbReference type="HAMAP" id="MF_01057">
    <property type="entry name" value="tRNA_methyltr_TrmB"/>
    <property type="match status" value="1"/>
</dbReference>
<dbReference type="InterPro" id="IPR029063">
    <property type="entry name" value="SAM-dependent_MTases_sf"/>
</dbReference>
<dbReference type="InterPro" id="IPR003358">
    <property type="entry name" value="tRNA_(Gua-N-7)_MeTrfase_Trmb"/>
</dbReference>
<dbReference type="InterPro" id="IPR055361">
    <property type="entry name" value="tRNA_methyltr_TrmB_bact"/>
</dbReference>
<dbReference type="NCBIfam" id="NF001080">
    <property type="entry name" value="PRK00121.2-2"/>
    <property type="match status" value="1"/>
</dbReference>
<dbReference type="NCBIfam" id="TIGR00091">
    <property type="entry name" value="tRNA (guanosine(46)-N7)-methyltransferase TrmB"/>
    <property type="match status" value="1"/>
</dbReference>
<dbReference type="PANTHER" id="PTHR23417">
    <property type="entry name" value="3-DEOXY-D-MANNO-OCTULOSONIC-ACID TRANSFERASE/TRNA GUANINE-N 7 - -METHYLTRANSFERASE"/>
    <property type="match status" value="1"/>
</dbReference>
<dbReference type="PANTHER" id="PTHR23417:SF14">
    <property type="entry name" value="PENTACOTRIPEPTIDE-REPEAT REGION OF PRORP DOMAIN-CONTAINING PROTEIN"/>
    <property type="match status" value="1"/>
</dbReference>
<dbReference type="Pfam" id="PF02390">
    <property type="entry name" value="Methyltransf_4"/>
    <property type="match status" value="1"/>
</dbReference>
<dbReference type="SUPFAM" id="SSF53335">
    <property type="entry name" value="S-adenosyl-L-methionine-dependent methyltransferases"/>
    <property type="match status" value="1"/>
</dbReference>
<dbReference type="PROSITE" id="PS51625">
    <property type="entry name" value="SAM_MT_TRMB"/>
    <property type="match status" value="1"/>
</dbReference>
<evidence type="ECO:0000250" key="1"/>
<evidence type="ECO:0000255" key="2">
    <source>
        <dbReference type="HAMAP-Rule" id="MF_01057"/>
    </source>
</evidence>
<reference key="1">
    <citation type="journal article" date="2004" name="Nucleic Acids Res.">
        <title>Whole genome comparisons of serotype 4b and 1/2a strains of the food-borne pathogen Listeria monocytogenes reveal new insights into the core genome components of this species.</title>
        <authorList>
            <person name="Nelson K.E."/>
            <person name="Fouts D.E."/>
            <person name="Mongodin E.F."/>
            <person name="Ravel J."/>
            <person name="DeBoy R.T."/>
            <person name="Kolonay J.F."/>
            <person name="Rasko D.A."/>
            <person name="Angiuoli S.V."/>
            <person name="Gill S.R."/>
            <person name="Paulsen I.T."/>
            <person name="Peterson J.D."/>
            <person name="White O."/>
            <person name="Nelson W.C."/>
            <person name="Nierman W.C."/>
            <person name="Beanan M.J."/>
            <person name="Brinkac L.M."/>
            <person name="Daugherty S.C."/>
            <person name="Dodson R.J."/>
            <person name="Durkin A.S."/>
            <person name="Madupu R."/>
            <person name="Haft D.H."/>
            <person name="Selengut J."/>
            <person name="Van Aken S.E."/>
            <person name="Khouri H.M."/>
            <person name="Fedorova N."/>
            <person name="Forberger H.A."/>
            <person name="Tran B."/>
            <person name="Kathariou S."/>
            <person name="Wonderling L.D."/>
            <person name="Uhlich G.A."/>
            <person name="Bayles D.O."/>
            <person name="Luchansky J.B."/>
            <person name="Fraser C.M."/>
        </authorList>
    </citation>
    <scope>NUCLEOTIDE SEQUENCE [LARGE SCALE GENOMIC DNA]</scope>
    <source>
        <strain>F2365</strain>
    </source>
</reference>
<proteinExistence type="inferred from homology"/>